<feature type="initiator methionine" description="Removed" evidence="2">
    <location>
        <position position="1"/>
    </location>
</feature>
<feature type="chain" id="PRO_0000231037" description="Fatty acid-binding protein, intestinal">
    <location>
        <begin position="2"/>
        <end position="132"/>
    </location>
</feature>
<feature type="binding site" evidence="2">
    <location>
        <position position="83"/>
    </location>
    <ligand>
        <name>hexadecanoate</name>
        <dbReference type="ChEBI" id="CHEBI:7896"/>
    </ligand>
</feature>
<feature type="binding site" evidence="2">
    <location>
        <position position="83"/>
    </location>
    <ligand>
        <name>tetradecanoate</name>
        <dbReference type="ChEBI" id="CHEBI:30807"/>
    </ligand>
</feature>
<feature type="binding site" evidence="2">
    <location>
        <position position="107"/>
    </location>
    <ligand>
        <name>hexadecanoate</name>
        <dbReference type="ChEBI" id="CHEBI:7896"/>
    </ligand>
</feature>
<feature type="binding site" evidence="2">
    <location>
        <position position="107"/>
    </location>
    <ligand>
        <name>tetradecanoate</name>
        <dbReference type="ChEBI" id="CHEBI:30807"/>
    </ligand>
</feature>
<feature type="modified residue" description="N-acetylalanine" evidence="2">
    <location>
        <position position="2"/>
    </location>
</feature>
<feature type="sequence conflict" description="In Ref. 1; AAZ38898." evidence="3" ref="1">
    <original>K</original>
    <variation>R</variation>
    <location>
        <position position="21"/>
    </location>
</feature>
<comment type="function">
    <text evidence="1">FABPs are thought to play a role in the intracellular transport of long-chain fatty acids and their acyl-CoA esters. FABP2 is probably involved in triglyceride-rich lipoprotein synthesis. Binds saturated long-chain fatty acids with a high affinity, but binds with a lower affinity to unsaturated long-chain fatty acids. FABP2 may also help maintain energy homeostasis by functioning as a lipid sensor (By similarity).</text>
</comment>
<comment type="subcellular location">
    <subcellularLocation>
        <location evidence="1">Cytoplasm</location>
    </subcellularLocation>
</comment>
<comment type="domain">
    <text evidence="1">Forms a beta-barrel structure that accommodates the hydrophobic ligand in its interior.</text>
</comment>
<comment type="similarity">
    <text evidence="3">Belongs to the calycin superfamily. Fatty-acid binding protein (FABP) family.</text>
</comment>
<reference key="1">
    <citation type="submission" date="2005-07" db="EMBL/GenBank/DDBJ databases">
        <title>Sus scrofa fatty acid binding protein 2, intestinal (FABP2).</title>
        <authorList>
            <person name="Jiang Y.Z."/>
            <person name="Li X.W."/>
        </authorList>
    </citation>
    <scope>NUCLEOTIDE SEQUENCE [GENOMIC DNA / MRNA]</scope>
</reference>
<sequence>MAFDGAWKIDRNENYDKFMEKMGINVVKRKLAAHDNLKLIITQEGNKFTVKESSTFRNIEIVFELGVTFNYSLADGTELTGNWNLEGNKLVGKFQRVDNGKELNTVREIIGDEMVQTYVYEGVEAKRIFKKN</sequence>
<protein>
    <recommendedName>
        <fullName>Fatty acid-binding protein, intestinal</fullName>
    </recommendedName>
    <alternativeName>
        <fullName>Fatty acid-binding protein 2</fullName>
    </alternativeName>
    <alternativeName>
        <fullName>Intestinal-type fatty acid-binding protein</fullName>
        <shortName>I-FABP</shortName>
    </alternativeName>
</protein>
<name>FABPI_PIG</name>
<proteinExistence type="evidence at transcript level"/>
<evidence type="ECO:0000250" key="1"/>
<evidence type="ECO:0000250" key="2">
    <source>
        <dbReference type="UniProtKB" id="P02693"/>
    </source>
</evidence>
<evidence type="ECO:0000305" key="3"/>
<dbReference type="EMBL" id="AY960624">
    <property type="protein sequence ID" value="AAX62516.1"/>
    <property type="molecule type" value="mRNA"/>
</dbReference>
<dbReference type="EMBL" id="DQ126268">
    <property type="protein sequence ID" value="AAZ38898.1"/>
    <property type="molecule type" value="Genomic_DNA"/>
</dbReference>
<dbReference type="RefSeq" id="NP_001026950.1">
    <property type="nucleotide sequence ID" value="NM_001031780.1"/>
</dbReference>
<dbReference type="SMR" id="Q45KW7"/>
<dbReference type="FunCoup" id="Q45KW7">
    <property type="interactions" value="184"/>
</dbReference>
<dbReference type="STRING" id="9823.ENSSSCP00000040315"/>
<dbReference type="PaxDb" id="9823-ENSSSCP00000025576"/>
<dbReference type="PeptideAtlas" id="Q45KW7"/>
<dbReference type="Ensembl" id="ENSSSCT00000040297.2">
    <property type="protein sequence ID" value="ENSSSCP00000040315.1"/>
    <property type="gene ID" value="ENSSSCG00000037272.2"/>
</dbReference>
<dbReference type="Ensembl" id="ENSSSCT00015047140.1">
    <property type="protein sequence ID" value="ENSSSCP00015018645.1"/>
    <property type="gene ID" value="ENSSSCG00015035376.1"/>
</dbReference>
<dbReference type="Ensembl" id="ENSSSCT00025099584.1">
    <property type="protein sequence ID" value="ENSSSCP00025043867.1"/>
    <property type="gene ID" value="ENSSSCG00025072440.1"/>
</dbReference>
<dbReference type="Ensembl" id="ENSSSCT00030000310.1">
    <property type="protein sequence ID" value="ENSSSCP00030000196.1"/>
    <property type="gene ID" value="ENSSSCG00030000197.1"/>
</dbReference>
<dbReference type="Ensembl" id="ENSSSCT00035058651.1">
    <property type="protein sequence ID" value="ENSSSCP00035023579.1"/>
    <property type="gene ID" value="ENSSSCG00035044137.1"/>
</dbReference>
<dbReference type="Ensembl" id="ENSSSCT00040073465.1">
    <property type="protein sequence ID" value="ENSSSCP00040031442.1"/>
    <property type="gene ID" value="ENSSSCG00040054179.1"/>
</dbReference>
<dbReference type="Ensembl" id="ENSSSCT00045016426.1">
    <property type="protein sequence ID" value="ENSSSCP00045011346.1"/>
    <property type="gene ID" value="ENSSSCG00045009670.1"/>
</dbReference>
<dbReference type="Ensembl" id="ENSSSCT00050051410.1">
    <property type="protein sequence ID" value="ENSSSCP00050021573.1"/>
    <property type="gene ID" value="ENSSSCG00050038128.1"/>
</dbReference>
<dbReference type="Ensembl" id="ENSSSCT00055028547.1">
    <property type="protein sequence ID" value="ENSSSCP00055022747.1"/>
    <property type="gene ID" value="ENSSSCG00055014467.1"/>
</dbReference>
<dbReference type="Ensembl" id="ENSSSCT00060069225.1">
    <property type="protein sequence ID" value="ENSSSCP00060029792.1"/>
    <property type="gene ID" value="ENSSSCG00060050880.1"/>
</dbReference>
<dbReference type="Ensembl" id="ENSSSCT00065021537.1">
    <property type="protein sequence ID" value="ENSSSCP00065008727.1"/>
    <property type="gene ID" value="ENSSSCG00065016241.1"/>
</dbReference>
<dbReference type="Ensembl" id="ENSSSCT00070044357.1">
    <property type="protein sequence ID" value="ENSSSCP00070037374.1"/>
    <property type="gene ID" value="ENSSSCG00070022309.1"/>
</dbReference>
<dbReference type="Ensembl" id="ENSSSCT00110060976">
    <property type="protein sequence ID" value="ENSSSCP00110042714"/>
    <property type="gene ID" value="ENSSSCG00110031905"/>
</dbReference>
<dbReference type="Ensembl" id="ENSSSCT00115023301">
    <property type="protein sequence ID" value="ENSSSCP00115022078"/>
    <property type="gene ID" value="ENSSSCG00115013454"/>
</dbReference>
<dbReference type="GeneID" id="595106"/>
<dbReference type="KEGG" id="ssc:595106"/>
<dbReference type="CTD" id="2169"/>
<dbReference type="VGNC" id="VGNC:87871">
    <property type="gene designation" value="FABP2"/>
</dbReference>
<dbReference type="eggNOG" id="KOG4015">
    <property type="taxonomic scope" value="Eukaryota"/>
</dbReference>
<dbReference type="GeneTree" id="ENSGT00800000124172"/>
<dbReference type="HOGENOM" id="CLU_113772_3_0_1"/>
<dbReference type="InParanoid" id="Q45KW7"/>
<dbReference type="OMA" id="GINLMKR"/>
<dbReference type="OrthoDB" id="9991853at2759"/>
<dbReference type="TreeFam" id="TF316894"/>
<dbReference type="Reactome" id="R-SSC-163560">
    <property type="pathway name" value="Triglyceride catabolism"/>
</dbReference>
<dbReference type="Proteomes" id="UP000008227">
    <property type="component" value="Chromosome 8"/>
</dbReference>
<dbReference type="Proteomes" id="UP000314985">
    <property type="component" value="Chromosome 8"/>
</dbReference>
<dbReference type="Proteomes" id="UP000694570">
    <property type="component" value="Unplaced"/>
</dbReference>
<dbReference type="Proteomes" id="UP000694571">
    <property type="component" value="Unplaced"/>
</dbReference>
<dbReference type="Proteomes" id="UP000694720">
    <property type="component" value="Unplaced"/>
</dbReference>
<dbReference type="Proteomes" id="UP000694722">
    <property type="component" value="Unplaced"/>
</dbReference>
<dbReference type="Proteomes" id="UP000694723">
    <property type="component" value="Unplaced"/>
</dbReference>
<dbReference type="Proteomes" id="UP000694724">
    <property type="component" value="Unplaced"/>
</dbReference>
<dbReference type="Proteomes" id="UP000694725">
    <property type="component" value="Unplaced"/>
</dbReference>
<dbReference type="Proteomes" id="UP000694726">
    <property type="component" value="Unplaced"/>
</dbReference>
<dbReference type="Proteomes" id="UP000694727">
    <property type="component" value="Unplaced"/>
</dbReference>
<dbReference type="Proteomes" id="UP000694728">
    <property type="component" value="Unplaced"/>
</dbReference>
<dbReference type="Bgee" id="ENSSSCG00000037272">
    <property type="expression patterns" value="Expressed in duodenum and 2 other cell types or tissues"/>
</dbReference>
<dbReference type="ExpressionAtlas" id="Q45KW7">
    <property type="expression patterns" value="baseline"/>
</dbReference>
<dbReference type="GO" id="GO:0005829">
    <property type="term" value="C:cytosol"/>
    <property type="evidence" value="ECO:0000318"/>
    <property type="project" value="GO_Central"/>
</dbReference>
<dbReference type="GO" id="GO:0005634">
    <property type="term" value="C:nucleus"/>
    <property type="evidence" value="ECO:0000318"/>
    <property type="project" value="GO_Central"/>
</dbReference>
<dbReference type="GO" id="GO:0036041">
    <property type="term" value="F:long-chain fatty acid binding"/>
    <property type="evidence" value="ECO:0000318"/>
    <property type="project" value="GO_Central"/>
</dbReference>
<dbReference type="GO" id="GO:0015908">
    <property type="term" value="P:fatty acid transport"/>
    <property type="evidence" value="ECO:0000318"/>
    <property type="project" value="GO_Central"/>
</dbReference>
<dbReference type="GO" id="GO:0098856">
    <property type="term" value="P:intestinal lipid absorption"/>
    <property type="evidence" value="ECO:0007669"/>
    <property type="project" value="Ensembl"/>
</dbReference>
<dbReference type="CDD" id="cd19445">
    <property type="entry name" value="FABP2"/>
    <property type="match status" value="1"/>
</dbReference>
<dbReference type="FunFam" id="2.40.128.20:FF:000001">
    <property type="entry name" value="Fatty acid-binding protein, adipocyte"/>
    <property type="match status" value="1"/>
</dbReference>
<dbReference type="Gene3D" id="2.40.128.20">
    <property type="match status" value="1"/>
</dbReference>
<dbReference type="InterPro" id="IPR012674">
    <property type="entry name" value="Calycin"/>
</dbReference>
<dbReference type="InterPro" id="IPR031272">
    <property type="entry name" value="FABP2"/>
</dbReference>
<dbReference type="InterPro" id="IPR000463">
    <property type="entry name" value="Fatty_acid-bd"/>
</dbReference>
<dbReference type="InterPro" id="IPR031259">
    <property type="entry name" value="ILBP"/>
</dbReference>
<dbReference type="InterPro" id="IPR000566">
    <property type="entry name" value="Lipocln_cytosolic_FA-bd_dom"/>
</dbReference>
<dbReference type="PANTHER" id="PTHR11955">
    <property type="entry name" value="FATTY ACID BINDING PROTEIN"/>
    <property type="match status" value="1"/>
</dbReference>
<dbReference type="Pfam" id="PF00061">
    <property type="entry name" value="Lipocalin"/>
    <property type="match status" value="1"/>
</dbReference>
<dbReference type="PRINTS" id="PR00178">
    <property type="entry name" value="FATTYACIDBP"/>
</dbReference>
<dbReference type="SUPFAM" id="SSF50814">
    <property type="entry name" value="Lipocalins"/>
    <property type="match status" value="1"/>
</dbReference>
<dbReference type="PROSITE" id="PS00214">
    <property type="entry name" value="FABP"/>
    <property type="match status" value="1"/>
</dbReference>
<accession>Q45KW7</accession>
<accession>Q56G53</accession>
<keyword id="KW-0007">Acetylation</keyword>
<keyword id="KW-0963">Cytoplasm</keyword>
<keyword id="KW-0446">Lipid-binding</keyword>
<keyword id="KW-1185">Reference proteome</keyword>
<keyword id="KW-0813">Transport</keyword>
<gene>
    <name type="primary">FABP2</name>
    <name type="synonym">FABPI</name>
</gene>
<organism>
    <name type="scientific">Sus scrofa</name>
    <name type="common">Pig</name>
    <dbReference type="NCBI Taxonomy" id="9823"/>
    <lineage>
        <taxon>Eukaryota</taxon>
        <taxon>Metazoa</taxon>
        <taxon>Chordata</taxon>
        <taxon>Craniata</taxon>
        <taxon>Vertebrata</taxon>
        <taxon>Euteleostomi</taxon>
        <taxon>Mammalia</taxon>
        <taxon>Eutheria</taxon>
        <taxon>Laurasiatheria</taxon>
        <taxon>Artiodactyla</taxon>
        <taxon>Suina</taxon>
        <taxon>Suidae</taxon>
        <taxon>Sus</taxon>
    </lineage>
</organism>